<accession>B6JEX2</accession>
<accession>F8BYV4</accession>
<gene>
    <name evidence="1" type="primary">rplQ</name>
    <name type="ordered locus">OCAR_5702</name>
    <name type="ordered locus">OCA5_c23050</name>
</gene>
<keyword id="KW-1185">Reference proteome</keyword>
<keyword id="KW-0687">Ribonucleoprotein</keyword>
<keyword id="KW-0689">Ribosomal protein</keyword>
<evidence type="ECO:0000255" key="1">
    <source>
        <dbReference type="HAMAP-Rule" id="MF_01368"/>
    </source>
</evidence>
<evidence type="ECO:0000305" key="2"/>
<feature type="chain" id="PRO_1000144457" description="Large ribosomal subunit protein bL17">
    <location>
        <begin position="1"/>
        <end position="139"/>
    </location>
</feature>
<reference key="1">
    <citation type="journal article" date="2008" name="J. Bacteriol.">
        <title>Genome sequence of the chemolithoautotrophic bacterium Oligotropha carboxidovorans OM5T.</title>
        <authorList>
            <person name="Paul D."/>
            <person name="Bridges S."/>
            <person name="Burgess S.C."/>
            <person name="Dandass Y."/>
            <person name="Lawrence M.L."/>
        </authorList>
    </citation>
    <scope>NUCLEOTIDE SEQUENCE [LARGE SCALE GENOMIC DNA]</scope>
    <source>
        <strain>ATCC 49405 / DSM 1227 / KCTC 32145 / OM5</strain>
    </source>
</reference>
<reference key="2">
    <citation type="journal article" date="2011" name="J. Bacteriol.">
        <title>Complete genome sequences of the chemolithoautotrophic Oligotropha carboxidovorans strains OM4 and OM5.</title>
        <authorList>
            <person name="Volland S."/>
            <person name="Rachinger M."/>
            <person name="Strittmatter A."/>
            <person name="Daniel R."/>
            <person name="Gottschalk G."/>
            <person name="Meyer O."/>
        </authorList>
    </citation>
    <scope>NUCLEOTIDE SEQUENCE [LARGE SCALE GENOMIC DNA]</scope>
    <source>
        <strain>ATCC 49405 / DSM 1227 / KCTC 32145 / OM5</strain>
    </source>
</reference>
<organism>
    <name type="scientific">Afipia carboxidovorans (strain ATCC 49405 / DSM 1227 / KCTC 32145 / OM5)</name>
    <name type="common">Oligotropha carboxidovorans</name>
    <dbReference type="NCBI Taxonomy" id="504832"/>
    <lineage>
        <taxon>Bacteria</taxon>
        <taxon>Pseudomonadati</taxon>
        <taxon>Pseudomonadota</taxon>
        <taxon>Alphaproteobacteria</taxon>
        <taxon>Hyphomicrobiales</taxon>
        <taxon>Nitrobacteraceae</taxon>
        <taxon>Afipia</taxon>
    </lineage>
</organism>
<dbReference type="EMBL" id="CP001196">
    <property type="protein sequence ID" value="ACI92830.1"/>
    <property type="molecule type" value="Genomic_DNA"/>
</dbReference>
<dbReference type="EMBL" id="CP002826">
    <property type="protein sequence ID" value="AEI07005.1"/>
    <property type="molecule type" value="Genomic_DNA"/>
</dbReference>
<dbReference type="RefSeq" id="WP_012562859.1">
    <property type="nucleotide sequence ID" value="NC_015684.1"/>
</dbReference>
<dbReference type="SMR" id="B6JEX2"/>
<dbReference type="STRING" id="504832.OCA5_c23050"/>
<dbReference type="KEGG" id="oca:OCAR_5702"/>
<dbReference type="KEGG" id="ocg:OCA5_c23050"/>
<dbReference type="PATRIC" id="fig|504832.7.peg.2430"/>
<dbReference type="eggNOG" id="COG0203">
    <property type="taxonomic scope" value="Bacteria"/>
</dbReference>
<dbReference type="HOGENOM" id="CLU_074407_2_0_5"/>
<dbReference type="OrthoDB" id="9809073at2"/>
<dbReference type="Proteomes" id="UP000007730">
    <property type="component" value="Chromosome"/>
</dbReference>
<dbReference type="GO" id="GO:0022625">
    <property type="term" value="C:cytosolic large ribosomal subunit"/>
    <property type="evidence" value="ECO:0007669"/>
    <property type="project" value="TreeGrafter"/>
</dbReference>
<dbReference type="GO" id="GO:0003735">
    <property type="term" value="F:structural constituent of ribosome"/>
    <property type="evidence" value="ECO:0007669"/>
    <property type="project" value="InterPro"/>
</dbReference>
<dbReference type="GO" id="GO:0006412">
    <property type="term" value="P:translation"/>
    <property type="evidence" value="ECO:0007669"/>
    <property type="project" value="UniProtKB-UniRule"/>
</dbReference>
<dbReference type="FunFam" id="3.90.1030.10:FF:000001">
    <property type="entry name" value="50S ribosomal protein L17"/>
    <property type="match status" value="1"/>
</dbReference>
<dbReference type="Gene3D" id="3.90.1030.10">
    <property type="entry name" value="Ribosomal protein L17"/>
    <property type="match status" value="1"/>
</dbReference>
<dbReference type="HAMAP" id="MF_01368">
    <property type="entry name" value="Ribosomal_bL17"/>
    <property type="match status" value="1"/>
</dbReference>
<dbReference type="InterPro" id="IPR000456">
    <property type="entry name" value="Ribosomal_bL17"/>
</dbReference>
<dbReference type="InterPro" id="IPR047859">
    <property type="entry name" value="Ribosomal_bL17_CS"/>
</dbReference>
<dbReference type="InterPro" id="IPR036373">
    <property type="entry name" value="Ribosomal_bL17_sf"/>
</dbReference>
<dbReference type="NCBIfam" id="TIGR00059">
    <property type="entry name" value="L17"/>
    <property type="match status" value="1"/>
</dbReference>
<dbReference type="PANTHER" id="PTHR14413:SF16">
    <property type="entry name" value="LARGE RIBOSOMAL SUBUNIT PROTEIN BL17M"/>
    <property type="match status" value="1"/>
</dbReference>
<dbReference type="PANTHER" id="PTHR14413">
    <property type="entry name" value="RIBOSOMAL PROTEIN L17"/>
    <property type="match status" value="1"/>
</dbReference>
<dbReference type="Pfam" id="PF01196">
    <property type="entry name" value="Ribosomal_L17"/>
    <property type="match status" value="1"/>
</dbReference>
<dbReference type="SUPFAM" id="SSF64263">
    <property type="entry name" value="Prokaryotic ribosomal protein L17"/>
    <property type="match status" value="1"/>
</dbReference>
<dbReference type="PROSITE" id="PS01167">
    <property type="entry name" value="RIBOSOMAL_L17"/>
    <property type="match status" value="1"/>
</dbReference>
<protein>
    <recommendedName>
        <fullName evidence="1">Large ribosomal subunit protein bL17</fullName>
    </recommendedName>
    <alternativeName>
        <fullName evidence="2">50S ribosomal protein L17</fullName>
    </alternativeName>
</protein>
<name>RL17_AFIC5</name>
<comment type="subunit">
    <text evidence="1">Part of the 50S ribosomal subunit. Contacts protein L32.</text>
</comment>
<comment type="similarity">
    <text evidence="1">Belongs to the bacterial ribosomal protein bL17 family.</text>
</comment>
<proteinExistence type="inferred from homology"/>
<sequence>MRHGKVHRKLNRTAEHRKAMFANMAASLIKHEQIVTTLPKAKELRPIVEKLVTLGKKGGLALRRQAISELRDHDQVKKLFDALAARYKDRQGGYTRIIKAGFRYGDNAPMAVIEFVDRDVDAKGQDSGPVQEKADSEAA</sequence>